<name>VIT_ONCMY</name>
<keyword id="KW-0903">Direct protein sequencing</keyword>
<keyword id="KW-1015">Disulfide bond</keyword>
<keyword id="KW-0325">Glycoprotein</keyword>
<keyword id="KW-0597">Phosphoprotein</keyword>
<keyword id="KW-0732">Signal</keyword>
<keyword id="KW-0758">Storage protein</keyword>
<evidence type="ECO:0000255" key="1"/>
<evidence type="ECO:0000255" key="2">
    <source>
        <dbReference type="PROSITE-ProRule" id="PRU00557"/>
    </source>
</evidence>
<evidence type="ECO:0000255" key="3">
    <source>
        <dbReference type="PROSITE-ProRule" id="PRU00580"/>
    </source>
</evidence>
<evidence type="ECO:0000256" key="4">
    <source>
        <dbReference type="SAM" id="MobiDB-lite"/>
    </source>
</evidence>
<evidence type="ECO:0000305" key="5"/>
<feature type="signal peptide" evidence="1">
    <location>
        <begin position="1"/>
        <end position="15"/>
    </location>
</feature>
<feature type="chain" id="PRO_0000041580" description="Vitellogenin">
    <location>
        <begin position="16"/>
        <end position="1659"/>
    </location>
</feature>
<feature type="chain" id="PRO_0000041581" description="Lipovitellin I">
    <location>
        <begin position="16"/>
        <end position="1088"/>
    </location>
</feature>
<feature type="chain" id="PRO_0000041582" description="Phosvitin">
    <location>
        <begin position="1089"/>
        <end position="1145"/>
    </location>
</feature>
<feature type="chain" id="PRO_0000041583" description="Lipovitellin II">
    <location>
        <begin position="1146"/>
        <end position="1659"/>
    </location>
</feature>
<feature type="domain" description="Vitellogenin" evidence="2">
    <location>
        <begin position="24"/>
        <end position="662"/>
    </location>
</feature>
<feature type="domain" description="VWFD" evidence="3">
    <location>
        <begin position="1389"/>
        <end position="1565"/>
    </location>
</feature>
<feature type="region of interest" description="Disordered" evidence="4">
    <location>
        <begin position="1090"/>
        <end position="1163"/>
    </location>
</feature>
<feature type="compositionally biased region" description="Low complexity" evidence="4">
    <location>
        <begin position="1090"/>
        <end position="1111"/>
    </location>
</feature>
<feature type="compositionally biased region" description="Low complexity" evidence="4">
    <location>
        <begin position="1119"/>
        <end position="1129"/>
    </location>
</feature>
<feature type="glycosylation site" description="N-linked (GlcNAc...) asparagine" evidence="1">
    <location>
        <position position="1089"/>
    </location>
</feature>
<feature type="glycosylation site" description="N-linked (GlcNAc...) asparagine" evidence="1">
    <location>
        <position position="1627"/>
    </location>
</feature>
<feature type="disulfide bond" evidence="3">
    <location>
        <begin position="1391"/>
        <end position="1528"/>
    </location>
</feature>
<feature type="disulfide bond" evidence="3">
    <location>
        <begin position="1414"/>
        <end position="1564"/>
    </location>
</feature>
<feature type="sequence variant">
    <original>I</original>
    <variation>T</variation>
    <location>
        <position position="1130"/>
    </location>
</feature>
<feature type="sequence conflict" description="In Ref. 4; AAB37720." evidence="5" ref="4">
    <original>F</original>
    <variation>L</variation>
    <location>
        <position position="894"/>
    </location>
</feature>
<feature type="sequence conflict" description="In Ref. 4; AAB37720." evidence="5" ref="4">
    <location>
        <position position="1035"/>
    </location>
</feature>
<feature type="sequence conflict" description="In Ref. 4; AAB37720." evidence="5" ref="4">
    <original>S</original>
    <variation>P</variation>
    <location>
        <position position="1158"/>
    </location>
</feature>
<feature type="sequence conflict" description="In Ref. 2; AAA81577." evidence="5" ref="2">
    <original>TAYLNKATSRL</original>
    <variation>LGRPKTTSDEP</variation>
    <location>
        <begin position="1208"/>
        <end position="1218"/>
    </location>
</feature>
<feature type="sequence conflict" description="In Ref. 2; AAA81577." evidence="5" ref="2">
    <original>M</original>
    <variation>T</variation>
    <location>
        <position position="1222"/>
    </location>
</feature>
<feature type="sequence conflict" description="In Ref. 2; AAA81577." evidence="5" ref="2">
    <original>T</original>
    <variation>N</variation>
    <location>
        <position position="1246"/>
    </location>
</feature>
<feature type="sequence conflict" description="In Ref. 2; AAA81577." evidence="5" ref="2">
    <original>E</original>
    <variation>G</variation>
    <location>
        <position position="1254"/>
    </location>
</feature>
<feature type="sequence conflict" description="In Ref. 2; AAA81577." evidence="5" ref="2">
    <original>RLSW</original>
    <variation>L</variation>
    <location>
        <begin position="1278"/>
        <end position="1281"/>
    </location>
</feature>
<feature type="sequence conflict" description="In Ref. 2; AAA81577." evidence="5" ref="2">
    <original>Y</original>
    <variation>H</variation>
    <location>
        <position position="1305"/>
    </location>
</feature>
<feature type="sequence conflict" description="In Ref. 2; AAA81577." evidence="5" ref="2">
    <original>N</original>
    <variation>S</variation>
    <location>
        <position position="1322"/>
    </location>
</feature>
<feature type="sequence conflict" description="In Ref. 3; AAB02176." evidence="5" ref="3">
    <original>VATSE</original>
    <variation>LPHLK</variation>
    <location>
        <begin position="1331"/>
        <end position="1335"/>
    </location>
</feature>
<feature type="sequence conflict" description="In Ref. 2; AAA81577." evidence="5" ref="2">
    <original>L</original>
    <variation>T</variation>
    <location>
        <position position="1352"/>
    </location>
</feature>
<feature type="sequence conflict" description="In Ref. 3; AAB02176." evidence="5" ref="3">
    <original>A</original>
    <variation>G</variation>
    <location>
        <position position="1419"/>
    </location>
</feature>
<feature type="sequence conflict" description="In Ref. 2; AAA81577." evidence="5" ref="2">
    <original>LLKKDHASEQNHI</original>
    <variation>SAEEGSVHLTKTRS</variation>
    <location>
        <begin position="1431"/>
        <end position="1443"/>
    </location>
</feature>
<feature type="sequence conflict" description="In Ref. 2; AAA81577." evidence="5" ref="2">
    <original>E</original>
    <variation>Q</variation>
    <location>
        <position position="1457"/>
    </location>
</feature>
<feature type="sequence conflict" description="In Ref. 2; AAA81577." evidence="5" ref="2">
    <original>I</original>
    <variation>V</variation>
    <location>
        <position position="1470"/>
    </location>
</feature>
<feature type="sequence conflict" description="In Ref. 2; AAA81577." evidence="5" ref="2">
    <original>DN</original>
    <variation>EQ</variation>
    <location>
        <begin position="1473"/>
        <end position="1474"/>
    </location>
</feature>
<feature type="sequence conflict" description="In Ref. 2; AAA81577." evidence="5" ref="2">
    <original>GK</original>
    <variation>KGE</variation>
    <location>
        <begin position="1490"/>
        <end position="1491"/>
    </location>
</feature>
<feature type="sequence conflict" description="In Ref. 2; AAA81577 and 3; AAB02176." evidence="5" ref="2 3">
    <original>K</original>
    <variation>E</variation>
    <location>
        <position position="1491"/>
    </location>
</feature>
<feature type="sequence conflict" description="In Ref. 2; AAA81577." evidence="5" ref="2">
    <original>E</original>
    <variation>K</variation>
    <location>
        <position position="1504"/>
    </location>
</feature>
<feature type="sequence conflict" description="In Ref. 3; AAB02176." evidence="5" ref="3">
    <original>KYSW</original>
    <variation>SNSR</variation>
    <location>
        <begin position="1509"/>
        <end position="1512"/>
    </location>
</feature>
<feature type="sequence conflict" description="In Ref. 2; AAA81577." evidence="5" ref="2">
    <original>L</original>
    <variation>V</variation>
    <location>
        <position position="1546"/>
    </location>
</feature>
<feature type="sequence conflict" description="In Ref. 2; AAA81577." evidence="5" ref="2">
    <original>SCR</original>
    <variation>RC</variation>
    <location>
        <begin position="1563"/>
        <end position="1565"/>
    </location>
</feature>
<feature type="sequence conflict" description="In Ref. 2; AAA81577." evidence="5" ref="2">
    <original>L</original>
    <variation>S</variation>
    <location>
        <position position="1606"/>
    </location>
</feature>
<feature type="sequence conflict" description="In Ref. 2; AAA81577." evidence="5" ref="2">
    <original>V</original>
    <variation>F</variation>
    <location>
        <position position="1622"/>
    </location>
</feature>
<gene>
    <name type="primary">vtg1</name>
</gene>
<sequence length="1659" mass="183128">MRAVVLALTLALVASQSVNFAPDFAASKTYVYKYEALLLGGLPEEGLARAGVKVISKVLISAVAENTYLLKLVNPEIFEYSGVWPKDPFVPAAKLTSALAAQFSIPIKFEYAKGVVGKVLAPTAVSETVLNVHRGILNILQLNIKKTQNVYELQEAGAQGVCKTHYVIREDAKAERIHLTKSKDLNNCQQRIMKDFGLAYTEKCVECRQRGEALMGAATYNYLMKPADNGALILEATVTELHQFTPFNEMSGAAQMEAKQMLTFVEIKKDPIIVPDNNYVHRGSIRYEFATEILQMPIQLLKISNARAQAVKILNHLVTYNTAPVHEDAPLKFLQFIQLLRMASSETINAIWAEFKAKPAYRHWILDAVPSIGSSVAVRFIKEKFLAGDITIFEAAQALVAAVHMVAADLETVKLVESLAFNHKIQTHPVLRELTMLGYGTMVSKYCVEHPNCPAELVKPIHELAVQAVANSKFEELSMVLKALGNAGHPASIKPITKLLPVFGTAAAALPLRVQADAVLALRNIAKREPRMVQEVAVQLFMDKALHPELRMLACIVLFETKPPMGLVITLASILKTEKNMQVASFTYSHMMSLTRSTAPDFASVAAACNVAVKMLSNKFRRLSCHFSQAIHLDAYSNPLRIGAAASAFYINDAATLFPRTVVAKARTYFAGAAADVLEVGVRTEGIQEALLKLPPAPENADRITKMRRVIKALSDWRSLATSKPLASIYVKFFGQEIAFANIDKSIIDQALQLANSPSAHALGRNALKALLAGATFQYVKPLLAAEVRRIFPTAVGLPMELSYYTAAVAKAYVNVRATLTPALPETFHAAQLLKTNIELHAEVRPSIVMHTFAVMGVNTAFIQAAIMARAKVRTIVPAKFAAQLDIANGNFKFEAFPVSPPEHIAAAHIETFAVARNVEDVPAERITPLIPAQGVARSTQQSRDKLTSMIADSAASFAGSLSRSSEILYSDLPSNFKPIIKAIVVHLEETICVERLGVKACFEFTSESAAFIRNTLFYNMIGKHSVLISVKPSASEPAIERLEFEVQVGPKAAEKIIKVITMNEEEEAPEGKTVLLKLKKILLPDLKNGTRASSSSSSSSSSSSRSSSSRSRSRKSESSSSSSSSSSRISKRDGPDQPYNPNDRKFKKNHKDSQSTSNVISRSKSSASSFHAIYKQDKFLGNKLAPMVIILFRLVRADHKIEGYQVTAYLNKATSRLQIIMAALDENDNWKLCADGVLLSKHKVTAKIAWGAECKDYNTFITAETGLVGPSPAVRLRLSWDKLPKVPKAVWRYVRIVSEFIPGYIPYYLADLVPMQKDKNNEKQIQFTVVATSERTLDVILKTPKMTLYKLGVNLPCSLPFESMTDLSPFDDNIVNKIHYLFSEVNAVKCSMVRDTLTTFNNKKYKINMPLSCYQVLAQDCTTELKFMVLLKKDHASEQNHINVKISDIDVDLYTEDHGVIVKVNEMEISNDNLPYKDPSGSIKIDRKGKGVSLYAPSHGLQEVYFDKYSWKIKVVDWMKGQTCGLCGKADGENRQEYRTPSGRLTKSSVSFAHSWVLPSDSCRDASECLMKLESVKLEKQVIVDDRESKCYSVEPVLRCLPGCLPVRTTPITIGFHCLPVDSNLNRSEGLSSIYEKSVDLMEKAEAHVACRCSEQCM</sequence>
<dbReference type="EMBL" id="X92804">
    <property type="protein sequence ID" value="CAA63421.1"/>
    <property type="molecule type" value="Genomic_DNA"/>
</dbReference>
<dbReference type="EMBL" id="M27651">
    <property type="protein sequence ID" value="AAA81577.1"/>
    <property type="molecule type" value="mRNA"/>
</dbReference>
<dbReference type="EMBL" id="U26703">
    <property type="protein sequence ID" value="AAB02176.1"/>
    <property type="molecule type" value="Genomic_DNA"/>
</dbReference>
<dbReference type="EMBL" id="S82450">
    <property type="protein sequence ID" value="AAB37720.1"/>
    <property type="molecule type" value="mRNA"/>
</dbReference>
<dbReference type="PIR" id="JC4956">
    <property type="entry name" value="JC4956"/>
</dbReference>
<dbReference type="SMR" id="Q92093"/>
<dbReference type="Allergome" id="7654">
    <property type="allergen name" value="Onc m 5"/>
</dbReference>
<dbReference type="GlyCosmos" id="Q92093">
    <property type="glycosylation" value="2 sites, No reported glycans"/>
</dbReference>
<dbReference type="OrthoDB" id="5956066at2759"/>
<dbReference type="Proteomes" id="UP000694395">
    <property type="component" value="Unplaced"/>
</dbReference>
<dbReference type="GO" id="GO:0005829">
    <property type="term" value="C:cytosol"/>
    <property type="evidence" value="ECO:0000314"/>
    <property type="project" value="AgBase"/>
</dbReference>
<dbReference type="GO" id="GO:0005615">
    <property type="term" value="C:extracellular space"/>
    <property type="evidence" value="ECO:0000314"/>
    <property type="project" value="AgBase"/>
</dbReference>
<dbReference type="GO" id="GO:0060417">
    <property type="term" value="C:yolk"/>
    <property type="evidence" value="ECO:0000314"/>
    <property type="project" value="AgBase"/>
</dbReference>
<dbReference type="GO" id="GO:0005319">
    <property type="term" value="F:lipid transporter activity"/>
    <property type="evidence" value="ECO:0007669"/>
    <property type="project" value="InterPro"/>
</dbReference>
<dbReference type="GO" id="GO:0045735">
    <property type="term" value="F:nutrient reservoir activity"/>
    <property type="evidence" value="ECO:0007669"/>
    <property type="project" value="UniProtKB-KW"/>
</dbReference>
<dbReference type="GO" id="GO:0005102">
    <property type="term" value="F:signaling receptor binding"/>
    <property type="evidence" value="ECO:0000353"/>
    <property type="project" value="AgBase"/>
</dbReference>
<dbReference type="GO" id="GO:0071391">
    <property type="term" value="P:cellular response to estrogen stimulus"/>
    <property type="evidence" value="ECO:0007669"/>
    <property type="project" value="TreeGrafter"/>
</dbReference>
<dbReference type="GO" id="GO:0034605">
    <property type="term" value="P:cellular response to heat"/>
    <property type="evidence" value="ECO:0000314"/>
    <property type="project" value="AgBase"/>
</dbReference>
<dbReference type="GO" id="GO:0032355">
    <property type="term" value="P:response to estradiol"/>
    <property type="evidence" value="ECO:0000314"/>
    <property type="project" value="AgBase"/>
</dbReference>
<dbReference type="GO" id="GO:0032868">
    <property type="term" value="P:response to insulin"/>
    <property type="evidence" value="ECO:0000314"/>
    <property type="project" value="AgBase"/>
</dbReference>
<dbReference type="GO" id="GO:1903165">
    <property type="term" value="P:response to polycyclic arene"/>
    <property type="evidence" value="ECO:0000314"/>
    <property type="project" value="AgBase"/>
</dbReference>
<dbReference type="FunFam" id="2.20.50.20:FF:000001">
    <property type="entry name" value="Vitellogenin 5"/>
    <property type="match status" value="1"/>
</dbReference>
<dbReference type="FunFam" id="1.25.10.20:FF:000002">
    <property type="entry name" value="Vitellogenin 7"/>
    <property type="match status" value="1"/>
</dbReference>
<dbReference type="FunFam" id="2.20.90.10:FF:000001">
    <property type="entry name" value="Vitellogenin 7"/>
    <property type="match status" value="1"/>
</dbReference>
<dbReference type="FunFam" id="2.30.230.10:FF:000002">
    <property type="entry name" value="Vitellogenin 7"/>
    <property type="match status" value="1"/>
</dbReference>
<dbReference type="Gene3D" id="2.30.230.10">
    <property type="entry name" value="Lipovitellin, beta-sheet shell regions, chain A"/>
    <property type="match status" value="1"/>
</dbReference>
<dbReference type="Gene3D" id="2.20.80.10">
    <property type="entry name" value="Lipovitellin-phosvitin complex, chain A, domain 4"/>
    <property type="match status" value="1"/>
</dbReference>
<dbReference type="Gene3D" id="2.20.50.20">
    <property type="entry name" value="Lipovitellin. Chain A, domain 3"/>
    <property type="match status" value="2"/>
</dbReference>
<dbReference type="Gene3D" id="2.20.90.10">
    <property type="entry name" value="Vitellinogen, beta-sheet shell domain"/>
    <property type="match status" value="1"/>
</dbReference>
<dbReference type="Gene3D" id="1.25.10.20">
    <property type="entry name" value="Vitellinogen, superhelical"/>
    <property type="match status" value="1"/>
</dbReference>
<dbReference type="InterPro" id="IPR015819">
    <property type="entry name" value="Lipid_transp_b-sht_shell"/>
</dbReference>
<dbReference type="InterPro" id="IPR011030">
    <property type="entry name" value="Lipovitellin_superhlx_dom"/>
</dbReference>
<dbReference type="InterPro" id="IPR015816">
    <property type="entry name" value="Vitellinogen_b-sht_N"/>
</dbReference>
<dbReference type="InterPro" id="IPR015258">
    <property type="entry name" value="Vitellinogen_b-sht_shell"/>
</dbReference>
<dbReference type="InterPro" id="IPR037088">
    <property type="entry name" value="Vitellinogen_b-sht_shell_sf"/>
</dbReference>
<dbReference type="InterPro" id="IPR015255">
    <property type="entry name" value="Vitellinogen_open_b-sht"/>
</dbReference>
<dbReference type="InterPro" id="IPR015817">
    <property type="entry name" value="Vitellinogen_open_b-sht_sub1"/>
</dbReference>
<dbReference type="InterPro" id="IPR050733">
    <property type="entry name" value="Vitellogenin/Apolipophorin"/>
</dbReference>
<dbReference type="InterPro" id="IPR001747">
    <property type="entry name" value="Vitellogenin_N"/>
</dbReference>
<dbReference type="InterPro" id="IPR001846">
    <property type="entry name" value="VWF_type-D"/>
</dbReference>
<dbReference type="PANTHER" id="PTHR23345">
    <property type="entry name" value="VITELLOGENIN-RELATED"/>
    <property type="match status" value="1"/>
</dbReference>
<dbReference type="PANTHER" id="PTHR23345:SF9">
    <property type="entry name" value="VITELLOGENIN-RELATED"/>
    <property type="match status" value="1"/>
</dbReference>
<dbReference type="Pfam" id="PF09175">
    <property type="entry name" value="Vit_b-sht_shell"/>
    <property type="match status" value="1"/>
</dbReference>
<dbReference type="Pfam" id="PF09172">
    <property type="entry name" value="Vit_open_b-sht"/>
    <property type="match status" value="1"/>
</dbReference>
<dbReference type="Pfam" id="PF01347">
    <property type="entry name" value="Vitellogenin_N"/>
    <property type="match status" value="1"/>
</dbReference>
<dbReference type="Pfam" id="PF00094">
    <property type="entry name" value="VWD"/>
    <property type="match status" value="1"/>
</dbReference>
<dbReference type="SMART" id="SM01169">
    <property type="entry name" value="DUF1943"/>
    <property type="match status" value="1"/>
</dbReference>
<dbReference type="SMART" id="SM01170">
    <property type="entry name" value="DUF1944"/>
    <property type="match status" value="1"/>
</dbReference>
<dbReference type="SMART" id="SM00638">
    <property type="entry name" value="LPD_N"/>
    <property type="match status" value="1"/>
</dbReference>
<dbReference type="SMART" id="SM00216">
    <property type="entry name" value="VWD"/>
    <property type="match status" value="1"/>
</dbReference>
<dbReference type="SUPFAM" id="SSF56968">
    <property type="entry name" value="Lipovitellin-phosvitin complex, beta-sheet shell regions"/>
    <property type="match status" value="3"/>
</dbReference>
<dbReference type="SUPFAM" id="SSF48431">
    <property type="entry name" value="Lipovitellin-phosvitin complex, superhelical domain"/>
    <property type="match status" value="1"/>
</dbReference>
<dbReference type="PROSITE" id="PS51211">
    <property type="entry name" value="VITELLOGENIN"/>
    <property type="match status" value="1"/>
</dbReference>
<dbReference type="PROSITE" id="PS51233">
    <property type="entry name" value="VWFD"/>
    <property type="match status" value="1"/>
</dbReference>
<accession>Q92093</accession>
<accession>P79882</accession>
<accession>Q91190</accession>
<accession>Q92092</accession>
<proteinExistence type="evidence at protein level"/>
<organism>
    <name type="scientific">Oncorhynchus mykiss</name>
    <name type="common">Rainbow trout</name>
    <name type="synonym">Salmo gairdneri</name>
    <dbReference type="NCBI Taxonomy" id="8022"/>
    <lineage>
        <taxon>Eukaryota</taxon>
        <taxon>Metazoa</taxon>
        <taxon>Chordata</taxon>
        <taxon>Craniata</taxon>
        <taxon>Vertebrata</taxon>
        <taxon>Euteleostomi</taxon>
        <taxon>Actinopterygii</taxon>
        <taxon>Neopterygii</taxon>
        <taxon>Teleostei</taxon>
        <taxon>Protacanthopterygii</taxon>
        <taxon>Salmoniformes</taxon>
        <taxon>Salmonidae</taxon>
        <taxon>Salmoninae</taxon>
        <taxon>Oncorhynchus</taxon>
    </lineage>
</organism>
<comment type="function">
    <text>Precursor of the major egg-yolk proteins that are sources of nutrients during early development of oviparous organisms.</text>
</comment>
<comment type="tissue specificity">
    <text>Produced by the liver, secreted into the blood and then sequestered by receptor mediated endocytosis into growing oocytes, where it is generally cleaved, giving rise to the respective yolk components lipovitellin-I, phosvitin, lipovitellin-II.</text>
</comment>
<comment type="induction">
    <text>By steroids (estrogen).</text>
</comment>
<comment type="PTM">
    <text>Phosvitin, an egg yolk storage protein, is one of the most highly phosphorylated (10%) proteins in nature.</text>
</comment>
<reference key="1">
    <citation type="journal article" date="1996" name="Gene">
        <title>Characterization of vitellogenin from rainbow trout (Oncorhynchus mykiss).</title>
        <authorList>
            <person name="Mouchel N."/>
            <person name="Trichet V."/>
            <person name="Betz A."/>
            <person name="le Pennec J.-P."/>
            <person name="Wolff J."/>
        </authorList>
    </citation>
    <scope>NUCLEOTIDE SEQUENCE [GENOMIC DNA]</scope>
    <source>
        <tissue>Liver</tissue>
    </source>
</reference>
<reference key="2">
    <citation type="journal article" date="1988" name="Gen. Comp. Endocrinol.">
        <title>Vitellogenin gene expression in male rainbow trout (Salmo gairdneri).</title>
        <authorList>
            <person name="le Guellec K."/>
            <person name="Lawless K."/>
            <person name="Valotaire Y."/>
            <person name="Kress M."/>
            <person name="Tenniswood M."/>
        </authorList>
    </citation>
    <scope>NUCLEOTIDE SEQUENCE [MRNA] OF 1208-1659</scope>
    <source>
        <tissue>Liver</tissue>
    </source>
</reference>
<reference key="3">
    <citation type="journal article" date="1996" name="Chem. Biol. Interact.">
        <title>Effects of estrogen and nonylphenol on the post-transcriptional regulation of vitellogenin gene expression.</title>
        <authorList>
            <person name="Ren L."/>
            <person name="Lewis S.K."/>
            <person name="Lech J.J."/>
        </authorList>
    </citation>
    <scope>NUCLEOTIDE SEQUENCE [GENOMIC DNA] OF 1331-1603</scope>
</reference>
<reference key="4">
    <citation type="journal article" date="1996" name="DNA Cell Biol.">
        <title>Isolation and characterization of a vitellogenin cDNA from rainbow trout (Oncorhynchus mykiss) and the complete sequence of a phosvitin coding segment.</title>
        <authorList>
            <person name="Goulas A."/>
            <person name="Triplett E.L."/>
            <person name="Taborsky G."/>
        </authorList>
    </citation>
    <scope>NUCLEOTIDE SEQUENCE [MRNA] OF 894-1301</scope>
    <scope>PROTEIN SEQUENCE OF 1089-1093</scope>
    <source>
        <tissue>Liver</tissue>
    </source>
</reference>
<protein>
    <recommendedName>
        <fullName>Vitellogenin</fullName>
        <shortName>VTG</shortName>
    </recommendedName>
    <component>
        <recommendedName>
            <fullName>Lipovitellin I</fullName>
            <shortName>LVI</shortName>
        </recommendedName>
    </component>
    <component>
        <recommendedName>
            <fullName>Phosvitin</fullName>
            <shortName>PV</shortName>
        </recommendedName>
    </component>
    <component>
        <recommendedName>
            <fullName>Lipovitellin II</fullName>
            <shortName>LVII</shortName>
        </recommendedName>
    </component>
</protein>